<gene>
    <name type="primary">EGT</name>
</gene>
<organism>
    <name type="scientific">Lacanobia oleracea granulosis virus</name>
    <name type="common">LoGV</name>
    <name type="synonym">Lacanobia oleracea granulovirus</name>
    <dbReference type="NCBI Taxonomy" id="52412"/>
    <lineage>
        <taxon>Viruses</taxon>
        <taxon>Viruses incertae sedis</taxon>
        <taxon>Naldaviricetes</taxon>
        <taxon>Lefavirales</taxon>
        <taxon>Baculoviridae</taxon>
        <taxon>Betabaculovirus</taxon>
        <taxon>Betabaculovirus lacoleraceae</taxon>
    </lineage>
</organism>
<reference key="1">
    <citation type="journal article" date="1998" name="J. Gen. Virol.">
        <title>Sequence and in vivo transcription of the Lacanobia oleracea granulovirus egt.</title>
        <authorList>
            <person name="Smith I."/>
            <person name="Goodale C."/>
        </authorList>
    </citation>
    <scope>NUCLEOTIDE SEQUENCE [GENOMIC DNA]</scope>
    <source>
        <strain>Scottish / LOGV-S1</strain>
    </source>
</reference>
<keyword id="KW-0328">Glycosyltransferase</keyword>
<keyword id="KW-0732">Signal</keyword>
<keyword id="KW-0808">Transferase</keyword>
<accession>Q98166</accession>
<comment type="function">
    <text evidence="1">Catalyzes the transfer of glucose from UDP-glucose to ecdysteroids which are insect molting hormones. Expression of egt interferes with normal insect development and block molting (By similarity).</text>
</comment>
<comment type="similarity">
    <text evidence="3">Belongs to the UDP-glycosyltransferase family.</text>
</comment>
<organismHost>
    <name type="scientific">Lacanobia oleracea</name>
    <dbReference type="NCBI Taxonomy" id="79499"/>
</organismHost>
<feature type="signal peptide" evidence="2">
    <location>
        <begin position="1"/>
        <end position="18"/>
    </location>
</feature>
<feature type="chain" id="PRO_0000036056" description="Ecdysteroid UDP-glucosyltransferase">
    <location>
        <begin position="19"/>
        <end position="460"/>
    </location>
</feature>
<sequence>MFISILLLALAVERILCANILCVFPTPAYSHQSVFSAYIDKLSWAGHNVTVITPMPRAVDHVHQVVSSLSVHYFNNLIKNSTMIKKRGVVADETTVTKENYMGLINLVAHEIKSPNVTRLLRNKGNKFDLIVCEAYVSYILVFGAIYDAPVIQFSSGYAIPENFETVGGEVARNHIKHPNIWRSDFSKSNFEQLMTENYLKNEWALLEKEQENMLKRDFGYHHDMCQLKSRVLMLFINVPAVFDNNRDVSNNIQYLGGIHLKKPRTVRDSRLLSFMEKHHIIVYASFGSGIDVLNMDANLIAEFVRVFNSIPYAVLWKVDSSIHLKHNISSNVHTQSWFPQRDVLNHPHIKVFITQGGVQSTDEAVNSGVPMIGIPIMGDQFYNVRRYTELGIGEKVNILRLEEEGLDRKIKNLVHNKSYELNIKRLNLFISDTPVKPLRKALWFTNYVLRNKDAIDKFK</sequence>
<proteinExistence type="inferred from homology"/>
<protein>
    <recommendedName>
        <fullName>Ecdysteroid UDP-glucosyltransferase</fullName>
        <ecNumber>2.4.1.-</ecNumber>
    </recommendedName>
</protein>
<name>UDPE_GVLO</name>
<evidence type="ECO:0000250" key="1"/>
<evidence type="ECO:0000255" key="2"/>
<evidence type="ECO:0000305" key="3"/>
<dbReference type="EC" id="2.4.1.-"/>
<dbReference type="EMBL" id="Y08294">
    <property type="protein sequence ID" value="CAA69602.1"/>
    <property type="molecule type" value="Genomic_DNA"/>
</dbReference>
<dbReference type="SMR" id="Q98166"/>
<dbReference type="CAZy" id="GT1">
    <property type="family name" value="Glycosyltransferase Family 1"/>
</dbReference>
<dbReference type="OrthoDB" id="5462at10239"/>
<dbReference type="Proteomes" id="UP000242554">
    <property type="component" value="Genome"/>
</dbReference>
<dbReference type="GO" id="GO:0008194">
    <property type="term" value="F:UDP-glycosyltransferase activity"/>
    <property type="evidence" value="ECO:0007669"/>
    <property type="project" value="InterPro"/>
</dbReference>
<dbReference type="CDD" id="cd03784">
    <property type="entry name" value="GT1_Gtf-like"/>
    <property type="match status" value="1"/>
</dbReference>
<dbReference type="FunFam" id="3.40.50.2000:FF:000021">
    <property type="entry name" value="UDP-glucuronosyltransferase"/>
    <property type="match status" value="1"/>
</dbReference>
<dbReference type="Gene3D" id="3.40.50.2000">
    <property type="entry name" value="Glycogen Phosphorylase B"/>
    <property type="match status" value="1"/>
</dbReference>
<dbReference type="InterPro" id="IPR016224">
    <property type="entry name" value="Ecdysteroid_UDP-Glc_Trfase"/>
</dbReference>
<dbReference type="InterPro" id="IPR050271">
    <property type="entry name" value="UDP-glycosyltransferase"/>
</dbReference>
<dbReference type="InterPro" id="IPR002213">
    <property type="entry name" value="UDP_glucos_trans"/>
</dbReference>
<dbReference type="InterPro" id="IPR035595">
    <property type="entry name" value="UDP_glycos_trans_CS"/>
</dbReference>
<dbReference type="PANTHER" id="PTHR48043">
    <property type="entry name" value="EG:EG0003.4 PROTEIN-RELATED"/>
    <property type="match status" value="1"/>
</dbReference>
<dbReference type="PANTHER" id="PTHR48043:SF145">
    <property type="entry name" value="FI06409P-RELATED"/>
    <property type="match status" value="1"/>
</dbReference>
<dbReference type="Pfam" id="PF00201">
    <property type="entry name" value="UDPGT"/>
    <property type="match status" value="1"/>
</dbReference>
<dbReference type="PIRSF" id="PIRSF000476">
    <property type="entry name" value="Ecdystd_UDP_glucosyltfrase"/>
    <property type="match status" value="1"/>
</dbReference>
<dbReference type="SUPFAM" id="SSF53756">
    <property type="entry name" value="UDP-Glycosyltransferase/glycogen phosphorylase"/>
    <property type="match status" value="1"/>
</dbReference>
<dbReference type="PROSITE" id="PS00375">
    <property type="entry name" value="UDPGT"/>
    <property type="match status" value="1"/>
</dbReference>